<name>CATV_NPVHZ</name>
<sequence>MRKYHSNIMHKIITFVSLLWTFVVCDEISLHTSSSPPPLSSPVPVLYYNLDQSEIYFKHFLQQYNKSYDDPKEYQYRYNVFKDNLNKINSQNRENLLNNKNNNDSLSTSAQFGVNKFSDKTPDEVLHSNTGFFLNLSQHYTLCENRIVKGAPDIRLPDYYDWRDTNKVTPIKDQGVCGSCWAFVAIGNIESQYAIRHNKLIDLSEQQLLDCDEVDLGCNGGLMHLAFQELLLMGGVETEADYPYQGSEQMCTLDNRKIAVKLNSCFKYDIRDENKLKELVYTTGPVAIAVDAMDIINYRRGILNQCHIYDLNHAVLLIGWGIENNVPYWIIKNSWGEDWGENGFLRVRRNVNACGLLNEFGASSVIQ</sequence>
<accession>Q8V5U0</accession>
<organismHost>
    <name type="scientific">Lepidoptera</name>
    <name type="common">butterflies and moths</name>
    <dbReference type="NCBI Taxonomy" id="7088"/>
</organismHost>
<evidence type="ECO:0000250" key="1"/>
<evidence type="ECO:0000255" key="2"/>
<evidence type="ECO:0000255" key="3">
    <source>
        <dbReference type="PROSITE-ProRule" id="PRU10089"/>
    </source>
</evidence>
<evidence type="ECO:0000255" key="4">
    <source>
        <dbReference type="PROSITE-ProRule" id="PRU10090"/>
    </source>
</evidence>
<dbReference type="EC" id="3.4.22.50"/>
<dbReference type="EMBL" id="AF334030">
    <property type="protein sequence ID" value="AAL56202.1"/>
    <property type="molecule type" value="Genomic_DNA"/>
</dbReference>
<dbReference type="SMR" id="Q8V5U0"/>
<dbReference type="MEROPS" id="C01.083"/>
<dbReference type="GlyCosmos" id="Q8V5U0">
    <property type="glycosylation" value="2 sites, No reported glycans"/>
</dbReference>
<dbReference type="GO" id="GO:0008234">
    <property type="term" value="F:cysteine-type peptidase activity"/>
    <property type="evidence" value="ECO:0007669"/>
    <property type="project" value="UniProtKB-KW"/>
</dbReference>
<dbReference type="GO" id="GO:0006508">
    <property type="term" value="P:proteolysis"/>
    <property type="evidence" value="ECO:0007669"/>
    <property type="project" value="UniProtKB-KW"/>
</dbReference>
<dbReference type="CDD" id="cd02248">
    <property type="entry name" value="Peptidase_C1A"/>
    <property type="match status" value="1"/>
</dbReference>
<dbReference type="FunFam" id="3.90.70.10:FF:000103">
    <property type="entry name" value="Hypothetical LOC496748"/>
    <property type="match status" value="1"/>
</dbReference>
<dbReference type="Gene3D" id="3.90.70.10">
    <property type="entry name" value="Cysteine proteinases"/>
    <property type="match status" value="1"/>
</dbReference>
<dbReference type="InterPro" id="IPR038765">
    <property type="entry name" value="Papain-like_cys_pep_sf"/>
</dbReference>
<dbReference type="InterPro" id="IPR025661">
    <property type="entry name" value="Pept_asp_AS"/>
</dbReference>
<dbReference type="InterPro" id="IPR025660">
    <property type="entry name" value="Pept_his_AS"/>
</dbReference>
<dbReference type="InterPro" id="IPR013128">
    <property type="entry name" value="Peptidase_C1A"/>
</dbReference>
<dbReference type="InterPro" id="IPR000668">
    <property type="entry name" value="Peptidase_C1A_C"/>
</dbReference>
<dbReference type="InterPro" id="IPR039417">
    <property type="entry name" value="Peptidase_C1A_papain-like"/>
</dbReference>
<dbReference type="InterPro" id="IPR013201">
    <property type="entry name" value="Prot_inhib_I29"/>
</dbReference>
<dbReference type="PANTHER" id="PTHR12411">
    <property type="entry name" value="CYSTEINE PROTEASE FAMILY C1-RELATED"/>
    <property type="match status" value="1"/>
</dbReference>
<dbReference type="Pfam" id="PF08246">
    <property type="entry name" value="Inhibitor_I29"/>
    <property type="match status" value="1"/>
</dbReference>
<dbReference type="Pfam" id="PF00112">
    <property type="entry name" value="Peptidase_C1"/>
    <property type="match status" value="1"/>
</dbReference>
<dbReference type="PRINTS" id="PR00705">
    <property type="entry name" value="PAPAIN"/>
</dbReference>
<dbReference type="SMART" id="SM00848">
    <property type="entry name" value="Inhibitor_I29"/>
    <property type="match status" value="1"/>
</dbReference>
<dbReference type="SMART" id="SM00645">
    <property type="entry name" value="Pept_C1"/>
    <property type="match status" value="1"/>
</dbReference>
<dbReference type="SUPFAM" id="SSF54001">
    <property type="entry name" value="Cysteine proteinases"/>
    <property type="match status" value="1"/>
</dbReference>
<dbReference type="PROSITE" id="PS00640">
    <property type="entry name" value="THIOL_PROTEASE_ASN"/>
    <property type="match status" value="1"/>
</dbReference>
<dbReference type="PROSITE" id="PS00639">
    <property type="entry name" value="THIOL_PROTEASE_HIS"/>
    <property type="match status" value="1"/>
</dbReference>
<gene>
    <name type="primary">VCATH</name>
    <name type="synonym">57</name>
</gene>
<keyword id="KW-1015">Disulfide bond</keyword>
<keyword id="KW-0325">Glycoprotein</keyword>
<keyword id="KW-0378">Hydrolase</keyword>
<keyword id="KW-0645">Protease</keyword>
<keyword id="KW-0732">Signal</keyword>
<keyword id="KW-0788">Thiol protease</keyword>
<keyword id="KW-0865">Zymogen</keyword>
<proteinExistence type="inferred from homology"/>
<comment type="function">
    <text evidence="1">Cysteine protease that plays an essential role in host liquefaction to facilitate horizontal transmission of the virus. May participate in the degradation of foreign protein expressed by the baculovirus system (By similarity).</text>
</comment>
<comment type="catalytic activity">
    <reaction>
        <text>Endopeptidase of broad specificity, hydrolyzing substrates of both cathepsin L and cathepsin B.</text>
        <dbReference type="EC" id="3.4.22.50"/>
    </reaction>
</comment>
<comment type="PTM">
    <text evidence="1">Synthesized as an inactive proenzyme and activated by proteolytic removal of the inhibitory propeptide.</text>
</comment>
<comment type="similarity">
    <text evidence="3 4">Belongs to the peptidase C1 family.</text>
</comment>
<feature type="signal peptide" evidence="2">
    <location>
        <begin position="1"/>
        <end position="25"/>
    </location>
</feature>
<feature type="propeptide" id="PRO_0000322211" description="Activation peptide" evidence="2">
    <location>
        <begin position="26"/>
        <end position="156"/>
    </location>
</feature>
<feature type="chain" id="PRO_0000050581" description="Viral cathepsin">
    <location>
        <begin position="157"/>
        <end position="367"/>
    </location>
</feature>
<feature type="active site" evidence="1">
    <location>
        <position position="180"/>
    </location>
</feature>
<feature type="active site" evidence="1">
    <location>
        <position position="313"/>
    </location>
</feature>
<feature type="active site" evidence="1">
    <location>
        <position position="333"/>
    </location>
</feature>
<feature type="glycosylation site" description="N-linked (GlcNAc...) asparagine; by host" evidence="2">
    <location>
        <position position="103"/>
    </location>
</feature>
<feature type="glycosylation site" description="N-linked (GlcNAc...) asparagine; by host" evidence="2">
    <location>
        <position position="135"/>
    </location>
</feature>
<feature type="disulfide bond" evidence="1">
    <location>
        <begin position="177"/>
        <end position="218"/>
    </location>
</feature>
<feature type="disulfide bond" evidence="1">
    <location>
        <begin position="211"/>
        <end position="251"/>
    </location>
</feature>
<feature type="disulfide bond" evidence="1">
    <location>
        <begin position="306"/>
        <end position="354"/>
    </location>
</feature>
<protein>
    <recommendedName>
        <fullName>Viral cathepsin</fullName>
        <shortName>V-cath</shortName>
        <ecNumber>3.4.22.50</ecNumber>
    </recommendedName>
    <alternativeName>
        <fullName>Cysteine proteinase</fullName>
        <shortName>CP</shortName>
    </alternativeName>
</protein>
<organism>
    <name type="scientific">Heliothis zea nuclear polyhedrosis virus</name>
    <name type="common">HzSNPV</name>
    <name type="synonym">Helicoverpa zea single nucleocapsid nuclear polyhedrosis virus</name>
    <dbReference type="NCBI Taxonomy" id="28290"/>
    <lineage>
        <taxon>Viruses</taxon>
        <taxon>Viruses incertae sedis</taxon>
        <taxon>Naldaviricetes</taxon>
        <taxon>Lefavirales</taxon>
        <taxon>Baculoviridae</taxon>
        <taxon>Alphabaculovirus</taxon>
    </lineage>
</organism>
<reference key="1">
    <citation type="submission" date="2001-01" db="EMBL/GenBank/DDBJ databases">
        <title>Genome sequence analysis of Helicoverpa zea single nucleocapsid nucleopolyhedrovirus.</title>
        <authorList>
            <person name="Chen X."/>
            <person name="Zhang W.-J."/>
            <person name="Wong J."/>
            <person name="Chun G."/>
            <person name="Lu A."/>
            <person name="McCutchen B.F."/>
            <person name="Presnail J.K."/>
            <person name="Herrmann R."/>
            <person name="Dolan M."/>
            <person name="Tingey S."/>
            <person name="Hu Z.-H."/>
            <person name="Vlak J.M."/>
        </authorList>
    </citation>
    <scope>NUCLEOTIDE SEQUENCE [GENOMIC DNA]</scope>
</reference>